<organism>
    <name type="scientific">Thermotoga petrophila (strain ATCC BAA-488 / DSM 13995 / JCM 10881 / RKU-1)</name>
    <dbReference type="NCBI Taxonomy" id="390874"/>
    <lineage>
        <taxon>Bacteria</taxon>
        <taxon>Thermotogati</taxon>
        <taxon>Thermotogota</taxon>
        <taxon>Thermotogae</taxon>
        <taxon>Thermotogales</taxon>
        <taxon>Thermotogaceae</taxon>
        <taxon>Thermotoga</taxon>
    </lineage>
</organism>
<gene>
    <name evidence="1" type="primary">guaA</name>
    <name type="ordered locus">Tpet_1105</name>
</gene>
<comment type="function">
    <text evidence="1">Catalyzes the synthesis of GMP from XMP.</text>
</comment>
<comment type="catalytic activity">
    <reaction evidence="1">
        <text>XMP + L-glutamine + ATP + H2O = GMP + L-glutamate + AMP + diphosphate + 2 H(+)</text>
        <dbReference type="Rhea" id="RHEA:11680"/>
        <dbReference type="ChEBI" id="CHEBI:15377"/>
        <dbReference type="ChEBI" id="CHEBI:15378"/>
        <dbReference type="ChEBI" id="CHEBI:29985"/>
        <dbReference type="ChEBI" id="CHEBI:30616"/>
        <dbReference type="ChEBI" id="CHEBI:33019"/>
        <dbReference type="ChEBI" id="CHEBI:57464"/>
        <dbReference type="ChEBI" id="CHEBI:58115"/>
        <dbReference type="ChEBI" id="CHEBI:58359"/>
        <dbReference type="ChEBI" id="CHEBI:456215"/>
        <dbReference type="EC" id="6.3.5.2"/>
    </reaction>
</comment>
<comment type="pathway">
    <text evidence="1">Purine metabolism; GMP biosynthesis; GMP from XMP (L-Gln route): step 1/1.</text>
</comment>
<comment type="subunit">
    <text evidence="1">Homodimer.</text>
</comment>
<dbReference type="EC" id="6.3.5.2" evidence="1"/>
<dbReference type="EMBL" id="CP000702">
    <property type="protein sequence ID" value="ABQ47119.1"/>
    <property type="molecule type" value="Genomic_DNA"/>
</dbReference>
<dbReference type="RefSeq" id="WP_011943643.1">
    <property type="nucleotide sequence ID" value="NC_009486.1"/>
</dbReference>
<dbReference type="SMR" id="A5ILP6"/>
<dbReference type="STRING" id="390874.Tpet_1105"/>
<dbReference type="KEGG" id="tpt:Tpet_1105"/>
<dbReference type="eggNOG" id="COG0518">
    <property type="taxonomic scope" value="Bacteria"/>
</dbReference>
<dbReference type="eggNOG" id="COG0519">
    <property type="taxonomic scope" value="Bacteria"/>
</dbReference>
<dbReference type="HOGENOM" id="CLU_014340_0_5_0"/>
<dbReference type="UniPathway" id="UPA00189">
    <property type="reaction ID" value="UER00296"/>
</dbReference>
<dbReference type="Proteomes" id="UP000006558">
    <property type="component" value="Chromosome"/>
</dbReference>
<dbReference type="GO" id="GO:0005829">
    <property type="term" value="C:cytosol"/>
    <property type="evidence" value="ECO:0007669"/>
    <property type="project" value="TreeGrafter"/>
</dbReference>
<dbReference type="GO" id="GO:0005524">
    <property type="term" value="F:ATP binding"/>
    <property type="evidence" value="ECO:0007669"/>
    <property type="project" value="UniProtKB-UniRule"/>
</dbReference>
<dbReference type="GO" id="GO:0003921">
    <property type="term" value="F:GMP synthase activity"/>
    <property type="evidence" value="ECO:0007669"/>
    <property type="project" value="InterPro"/>
</dbReference>
<dbReference type="CDD" id="cd01742">
    <property type="entry name" value="GATase1_GMP_Synthase"/>
    <property type="match status" value="1"/>
</dbReference>
<dbReference type="CDD" id="cd01997">
    <property type="entry name" value="GMP_synthase_C"/>
    <property type="match status" value="1"/>
</dbReference>
<dbReference type="FunFam" id="3.30.300.10:FF:000002">
    <property type="entry name" value="GMP synthase [glutamine-hydrolyzing]"/>
    <property type="match status" value="1"/>
</dbReference>
<dbReference type="FunFam" id="3.40.50.620:FF:000001">
    <property type="entry name" value="GMP synthase [glutamine-hydrolyzing]"/>
    <property type="match status" value="1"/>
</dbReference>
<dbReference type="FunFam" id="3.40.50.880:FF:000001">
    <property type="entry name" value="GMP synthase [glutamine-hydrolyzing]"/>
    <property type="match status" value="1"/>
</dbReference>
<dbReference type="Gene3D" id="3.30.300.10">
    <property type="match status" value="1"/>
</dbReference>
<dbReference type="Gene3D" id="3.40.50.880">
    <property type="match status" value="1"/>
</dbReference>
<dbReference type="Gene3D" id="3.40.50.620">
    <property type="entry name" value="HUPs"/>
    <property type="match status" value="1"/>
</dbReference>
<dbReference type="HAMAP" id="MF_00344">
    <property type="entry name" value="GMP_synthase"/>
    <property type="match status" value="1"/>
</dbReference>
<dbReference type="InterPro" id="IPR048267">
    <property type="entry name" value="Arginosuc_syn_N"/>
</dbReference>
<dbReference type="InterPro" id="IPR029062">
    <property type="entry name" value="Class_I_gatase-like"/>
</dbReference>
<dbReference type="InterPro" id="IPR017926">
    <property type="entry name" value="GATASE"/>
</dbReference>
<dbReference type="InterPro" id="IPR001674">
    <property type="entry name" value="GMP_synth_C"/>
</dbReference>
<dbReference type="InterPro" id="IPR004739">
    <property type="entry name" value="GMP_synth_GATase"/>
</dbReference>
<dbReference type="InterPro" id="IPR022955">
    <property type="entry name" value="GMP_synthase"/>
</dbReference>
<dbReference type="InterPro" id="IPR025777">
    <property type="entry name" value="GMPS_ATP_PPase_dom"/>
</dbReference>
<dbReference type="InterPro" id="IPR014729">
    <property type="entry name" value="Rossmann-like_a/b/a_fold"/>
</dbReference>
<dbReference type="NCBIfam" id="TIGR00884">
    <property type="entry name" value="guaA_Cterm"/>
    <property type="match status" value="1"/>
</dbReference>
<dbReference type="NCBIfam" id="TIGR00888">
    <property type="entry name" value="guaA_Nterm"/>
    <property type="match status" value="1"/>
</dbReference>
<dbReference type="NCBIfam" id="NF000848">
    <property type="entry name" value="PRK00074.1"/>
    <property type="match status" value="1"/>
</dbReference>
<dbReference type="PANTHER" id="PTHR11922:SF2">
    <property type="entry name" value="GMP SYNTHASE [GLUTAMINE-HYDROLYZING]"/>
    <property type="match status" value="1"/>
</dbReference>
<dbReference type="PANTHER" id="PTHR11922">
    <property type="entry name" value="GMP SYNTHASE-RELATED"/>
    <property type="match status" value="1"/>
</dbReference>
<dbReference type="Pfam" id="PF00764">
    <property type="entry name" value="Arginosuc_synth"/>
    <property type="match status" value="1"/>
</dbReference>
<dbReference type="Pfam" id="PF00117">
    <property type="entry name" value="GATase"/>
    <property type="match status" value="1"/>
</dbReference>
<dbReference type="Pfam" id="PF00958">
    <property type="entry name" value="GMP_synt_C"/>
    <property type="match status" value="1"/>
</dbReference>
<dbReference type="PRINTS" id="PR00096">
    <property type="entry name" value="GATASE"/>
</dbReference>
<dbReference type="SUPFAM" id="SSF52402">
    <property type="entry name" value="Adenine nucleotide alpha hydrolases-like"/>
    <property type="match status" value="1"/>
</dbReference>
<dbReference type="SUPFAM" id="SSF52317">
    <property type="entry name" value="Class I glutamine amidotransferase-like"/>
    <property type="match status" value="1"/>
</dbReference>
<dbReference type="SUPFAM" id="SSF54810">
    <property type="entry name" value="GMP synthetase C-terminal dimerisation domain"/>
    <property type="match status" value="1"/>
</dbReference>
<dbReference type="PROSITE" id="PS51273">
    <property type="entry name" value="GATASE_TYPE_1"/>
    <property type="match status" value="1"/>
</dbReference>
<dbReference type="PROSITE" id="PS51553">
    <property type="entry name" value="GMPS_ATP_PPASE"/>
    <property type="match status" value="1"/>
</dbReference>
<proteinExistence type="inferred from homology"/>
<sequence length="501" mass="57070">MVLVVDYGSQYSRLITRRIRENEVYSEVVFPDDKVDLSKVDTVILSGGPRSVYEEDAPKLPEWFQEYKGPVLAICYGMQLIVKELGGEVRRGRGEYGRTLVELSRDPIFEGIPEKVHVWMSHGDEVVRLPEGFHPIAVSETGVIAAATDGKRFWLLQFHPEVHHTEYGDRMISNFLFNVCKLEKNWKIGDLVEEKIRHIKETIGNKKAILALSGGVDSSVAAVLVHRAIGKNLVCVFVDHGLLRKNEREEVERVFKEHFDMNLVVVDARKRFLEKLRGVTDPEKKRKIIGEEFIRVFEEEAKKHDVEFLVQGTIYSDVIESAASGKTTAKIKSHHNVGGLPEKMNLKLVEPLRDLFKDEVRKVGKYLGIPDRIINRHPFPGPGLAVRVLGEVTEEKLEILREADYIFIETLRKHDYYDKVWQAFAVLLPIKSVGVKGDARAYEYVVALRAVNSVEGMTADWSRIPHDILDEAARRITREVKGVGRVVYDITSKPPATIEWE</sequence>
<feature type="chain" id="PRO_1000120446" description="GMP synthase [glutamine-hydrolyzing]">
    <location>
        <begin position="1"/>
        <end position="501"/>
    </location>
</feature>
<feature type="domain" description="Glutamine amidotransferase type-1" evidence="1">
    <location>
        <begin position="1"/>
        <end position="185"/>
    </location>
</feature>
<feature type="domain" description="GMPS ATP-PPase" evidence="1">
    <location>
        <begin position="186"/>
        <end position="376"/>
    </location>
</feature>
<feature type="active site" description="Nucleophile" evidence="1">
    <location>
        <position position="75"/>
    </location>
</feature>
<feature type="active site" evidence="1">
    <location>
        <position position="159"/>
    </location>
</feature>
<feature type="active site" evidence="1">
    <location>
        <position position="161"/>
    </location>
</feature>
<feature type="binding site" evidence="1">
    <location>
        <begin position="213"/>
        <end position="219"/>
    </location>
    <ligand>
        <name>ATP</name>
        <dbReference type="ChEBI" id="CHEBI:30616"/>
    </ligand>
</feature>
<name>GUAA_THEP1</name>
<accession>A5ILP6</accession>
<reference key="1">
    <citation type="submission" date="2007-05" db="EMBL/GenBank/DDBJ databases">
        <title>Complete sequence of Thermotoga petrophila RKU-1.</title>
        <authorList>
            <consortium name="US DOE Joint Genome Institute"/>
            <person name="Copeland A."/>
            <person name="Lucas S."/>
            <person name="Lapidus A."/>
            <person name="Barry K."/>
            <person name="Glavina del Rio T."/>
            <person name="Dalin E."/>
            <person name="Tice H."/>
            <person name="Pitluck S."/>
            <person name="Sims D."/>
            <person name="Brettin T."/>
            <person name="Bruce D."/>
            <person name="Detter J.C."/>
            <person name="Han C."/>
            <person name="Tapia R."/>
            <person name="Schmutz J."/>
            <person name="Larimer F."/>
            <person name="Land M."/>
            <person name="Hauser L."/>
            <person name="Kyrpides N."/>
            <person name="Mikhailova N."/>
            <person name="Nelson K."/>
            <person name="Gogarten J.P."/>
            <person name="Noll K."/>
            <person name="Richardson P."/>
        </authorList>
    </citation>
    <scope>NUCLEOTIDE SEQUENCE [LARGE SCALE GENOMIC DNA]</scope>
    <source>
        <strain>ATCC BAA-488 / DSM 13995 / JCM 10881 / RKU-1</strain>
    </source>
</reference>
<protein>
    <recommendedName>
        <fullName evidence="1">GMP synthase [glutamine-hydrolyzing]</fullName>
        <ecNumber evidence="1">6.3.5.2</ecNumber>
    </recommendedName>
    <alternativeName>
        <fullName evidence="1">GMP synthetase</fullName>
    </alternativeName>
    <alternativeName>
        <fullName evidence="1">Glutamine amidotransferase</fullName>
    </alternativeName>
</protein>
<evidence type="ECO:0000255" key="1">
    <source>
        <dbReference type="HAMAP-Rule" id="MF_00344"/>
    </source>
</evidence>
<keyword id="KW-0067">ATP-binding</keyword>
<keyword id="KW-0315">Glutamine amidotransferase</keyword>
<keyword id="KW-0332">GMP biosynthesis</keyword>
<keyword id="KW-0436">Ligase</keyword>
<keyword id="KW-0547">Nucleotide-binding</keyword>
<keyword id="KW-0658">Purine biosynthesis</keyword>